<sequence length="450" mass="50084">SEVCFPRLGCFSDDAPWAGIVQRPLKILPWSPKDVDTRFLLYTNQNQNNYQELVADPSTITNSNFRMDRKTRFIIHGFIDKGEEDWLSNICKNLFKVESVNCICVDWKGGSRTGYTQASQNIRIVGAEVAYFVEVLKSSLGYSPSNVHVIGHSLGSHAAGEAGRRTNGTIERITGLDPAEPCFQGTPELVRLDPSDAKFVDVIHTDAAPIIPNLGFGMSQTVGHLDFFPNGGKQMPGCQKNILSQIVDIDGIWEGTRDFVACNHLRSYKYYADSILNPDGFAGFPCDSYNVFTANKCFPCPSEGCPQMGHYADRFPGKTNGVSQVFYLNTGDASNFARWRYKVSVTLSGKKVTGHILVSLFGNEGNSRQYEIYKGTLQPDNTHSDEFDSDVEVGDLQKVKFIWYNNNVINPTLPRVGASKITVERNDGKVYDFCSQETVREEVLLTLNPC</sequence>
<evidence type="ECO:0000250" key="1">
    <source>
        <dbReference type="UniProtKB" id="P16233"/>
    </source>
</evidence>
<evidence type="ECO:0000255" key="2">
    <source>
        <dbReference type="PROSITE-ProRule" id="PRU00152"/>
    </source>
</evidence>
<evidence type="ECO:0000269" key="3">
    <source>
    </source>
</evidence>
<evidence type="ECO:0000269" key="4">
    <source>
    </source>
</evidence>
<evidence type="ECO:0000305" key="5"/>
<evidence type="ECO:0007829" key="6">
    <source>
        <dbReference type="PDB" id="1ETH"/>
    </source>
</evidence>
<comment type="function">
    <text evidence="1">Plays an important role in fat metabolism. It preferentially splits the esters of long-chain fatty acids at positions 1 and 3, producing mainly 2-monoacylglycerol and free fatty acids, and shows considerably higher activity against insoluble emulsified substrates than against soluble ones.</text>
</comment>
<comment type="catalytic activity">
    <reaction evidence="1">
        <text>a triacylglycerol + H2O = a diacylglycerol + a fatty acid + H(+)</text>
        <dbReference type="Rhea" id="RHEA:12044"/>
        <dbReference type="ChEBI" id="CHEBI:15377"/>
        <dbReference type="ChEBI" id="CHEBI:15378"/>
        <dbReference type="ChEBI" id="CHEBI:17855"/>
        <dbReference type="ChEBI" id="CHEBI:18035"/>
        <dbReference type="ChEBI" id="CHEBI:28868"/>
        <dbReference type="EC" id="3.1.1.3"/>
    </reaction>
    <physiologicalReaction direction="left-to-right" evidence="1">
        <dbReference type="Rhea" id="RHEA:12045"/>
    </physiologicalReaction>
</comment>
<comment type="catalytic activity">
    <reaction evidence="1">
        <text>1,2,3-tributanoylglycerol + H2O = dibutanoylglycerol + butanoate + H(+)</text>
        <dbReference type="Rhea" id="RHEA:40475"/>
        <dbReference type="ChEBI" id="CHEBI:15377"/>
        <dbReference type="ChEBI" id="CHEBI:15378"/>
        <dbReference type="ChEBI" id="CHEBI:17968"/>
        <dbReference type="ChEBI" id="CHEBI:35020"/>
        <dbReference type="ChEBI" id="CHEBI:76478"/>
    </reaction>
    <physiologicalReaction direction="left-to-right" evidence="1">
        <dbReference type="Rhea" id="RHEA:40476"/>
    </physiologicalReaction>
</comment>
<comment type="catalytic activity">
    <reaction evidence="1">
        <text>1,2,3-tri-(9Z-octadecenoyl)-glycerol + H2O = di-(9Z)-octadecenoylglycerol + (9Z)-octadecenoate + H(+)</text>
        <dbReference type="Rhea" id="RHEA:38575"/>
        <dbReference type="ChEBI" id="CHEBI:15377"/>
        <dbReference type="ChEBI" id="CHEBI:15378"/>
        <dbReference type="ChEBI" id="CHEBI:30823"/>
        <dbReference type="ChEBI" id="CHEBI:53753"/>
        <dbReference type="ChEBI" id="CHEBI:75945"/>
    </reaction>
    <physiologicalReaction direction="left-to-right" evidence="1">
        <dbReference type="Rhea" id="RHEA:38576"/>
    </physiologicalReaction>
</comment>
<comment type="catalytic activity">
    <reaction evidence="1">
        <text>all-trans-retinyl hexadecanoate + H2O = all-trans-retinol + hexadecanoate + H(+)</text>
        <dbReference type="Rhea" id="RHEA:13933"/>
        <dbReference type="ChEBI" id="CHEBI:7896"/>
        <dbReference type="ChEBI" id="CHEBI:15377"/>
        <dbReference type="ChEBI" id="CHEBI:15378"/>
        <dbReference type="ChEBI" id="CHEBI:17336"/>
        <dbReference type="ChEBI" id="CHEBI:17616"/>
    </reaction>
    <physiologicalReaction direction="left-to-right" evidence="1">
        <dbReference type="Rhea" id="RHEA:13934"/>
    </physiologicalReaction>
</comment>
<comment type="catalytic activity">
    <reaction evidence="1">
        <text>1,2-di-(9Z-octadecenoyl)-glycerol + H2O = (9Z-octadecenoyl)-glycerol + (9Z)-octadecenoate + H(+)</text>
        <dbReference type="Rhea" id="RHEA:38455"/>
        <dbReference type="ChEBI" id="CHEBI:15377"/>
        <dbReference type="ChEBI" id="CHEBI:15378"/>
        <dbReference type="ChEBI" id="CHEBI:30823"/>
        <dbReference type="ChEBI" id="CHEBI:52323"/>
        <dbReference type="ChEBI" id="CHEBI:75937"/>
    </reaction>
    <physiologicalReaction direction="left-to-right" evidence="1">
        <dbReference type="Rhea" id="RHEA:38456"/>
    </physiologicalReaction>
</comment>
<comment type="activity regulation">
    <text evidence="1">Inhibited by bile salts, is reactivated by (pro)colipase/CLPS.</text>
</comment>
<comment type="subunit">
    <text evidence="1">Forms a 1:1 stoichiometric complex with (pro)colipase/CLPS.</text>
</comment>
<comment type="subcellular location">
    <subcellularLocation>
        <location evidence="1">Secreted</location>
    </subcellularLocation>
</comment>
<comment type="similarity">
    <text evidence="5">Belongs to the AB hydrolase superfamily. Lipase family.</text>
</comment>
<gene>
    <name type="primary">PNLIP</name>
</gene>
<feature type="chain" id="PRO_0000090356" description="Pancreatic triacylglycerol lipase">
    <location>
        <begin position="1"/>
        <end position="450"/>
    </location>
</feature>
<feature type="domain" description="PLAT" evidence="2">
    <location>
        <begin position="339"/>
        <end position="450"/>
    </location>
</feature>
<feature type="active site" description="Nucleophile">
    <location>
        <position position="153"/>
    </location>
</feature>
<feature type="active site" description="Charge relay system">
    <location>
        <position position="177"/>
    </location>
</feature>
<feature type="active site" description="Charge relay system">
    <location>
        <position position="264"/>
    </location>
</feature>
<feature type="binding site">
    <location>
        <position position="188"/>
    </location>
    <ligand>
        <name>Ca(2+)</name>
        <dbReference type="ChEBI" id="CHEBI:29108"/>
    </ligand>
</feature>
<feature type="binding site">
    <location>
        <position position="191"/>
    </location>
    <ligand>
        <name>Ca(2+)</name>
        <dbReference type="ChEBI" id="CHEBI:29108"/>
    </ligand>
</feature>
<feature type="binding site">
    <location>
        <position position="193"/>
    </location>
    <ligand>
        <name>Ca(2+)</name>
        <dbReference type="ChEBI" id="CHEBI:29108"/>
    </ligand>
</feature>
<feature type="binding site">
    <location>
        <position position="196"/>
    </location>
    <ligand>
        <name>Ca(2+)</name>
        <dbReference type="ChEBI" id="CHEBI:29108"/>
    </ligand>
</feature>
<feature type="glycosylation site" description="N-linked (GlcNAc...) asparagine" evidence="3">
    <location>
        <position position="167"/>
    </location>
</feature>
<feature type="disulfide bond" evidence="2 4">
    <location>
        <begin position="4"/>
        <end position="10"/>
    </location>
</feature>
<feature type="disulfide bond" description="Alternate" evidence="2 4">
    <location>
        <begin position="91"/>
        <end position="104"/>
    </location>
</feature>
<feature type="disulfide bond" description="Alternate" evidence="2 4">
    <location>
        <begin position="91"/>
        <end position="102"/>
    </location>
</feature>
<feature type="disulfide bond" evidence="2 4">
    <location>
        <begin position="238"/>
        <end position="262"/>
    </location>
</feature>
<feature type="disulfide bond" evidence="2 4">
    <location>
        <begin position="286"/>
        <end position="297"/>
    </location>
</feature>
<feature type="disulfide bond" evidence="2 4">
    <location>
        <begin position="300"/>
        <end position="305"/>
    </location>
</feature>
<feature type="disulfide bond" evidence="2 4">
    <location>
        <begin position="434"/>
        <end position="450"/>
    </location>
</feature>
<feature type="turn" evidence="6">
    <location>
        <begin position="6"/>
        <end position="8"/>
    </location>
</feature>
<feature type="strand" evidence="6">
    <location>
        <begin position="17"/>
        <end position="20"/>
    </location>
</feature>
<feature type="strand" evidence="6">
    <location>
        <begin position="38"/>
        <end position="43"/>
    </location>
</feature>
<feature type="strand" evidence="6">
    <location>
        <begin position="46"/>
        <end position="53"/>
    </location>
</feature>
<feature type="helix" evidence="6">
    <location>
        <begin position="57"/>
        <end position="61"/>
    </location>
</feature>
<feature type="strand" evidence="6">
    <location>
        <begin position="62"/>
        <end position="64"/>
    </location>
</feature>
<feature type="strand" evidence="6">
    <location>
        <begin position="71"/>
        <end position="75"/>
    </location>
</feature>
<feature type="helix" evidence="6">
    <location>
        <begin position="85"/>
        <end position="97"/>
    </location>
</feature>
<feature type="strand" evidence="6">
    <location>
        <begin position="101"/>
        <end position="106"/>
    </location>
</feature>
<feature type="helix" evidence="6">
    <location>
        <begin position="110"/>
        <end position="112"/>
    </location>
</feature>
<feature type="helix" evidence="6">
    <location>
        <begin position="115"/>
        <end position="138"/>
    </location>
</feature>
<feature type="helix" evidence="6">
    <location>
        <begin position="144"/>
        <end position="146"/>
    </location>
</feature>
<feature type="strand" evidence="6">
    <location>
        <begin position="147"/>
        <end position="152"/>
    </location>
</feature>
<feature type="helix" evidence="6">
    <location>
        <begin position="154"/>
        <end position="165"/>
    </location>
</feature>
<feature type="turn" evidence="6">
    <location>
        <begin position="166"/>
        <end position="168"/>
    </location>
</feature>
<feature type="strand" evidence="6">
    <location>
        <begin position="170"/>
        <end position="177"/>
    </location>
</feature>
<feature type="turn" evidence="6">
    <location>
        <begin position="181"/>
        <end position="183"/>
    </location>
</feature>
<feature type="strand" evidence="6">
    <location>
        <begin position="184"/>
        <end position="186"/>
    </location>
</feature>
<feature type="turn" evidence="6">
    <location>
        <begin position="188"/>
        <end position="190"/>
    </location>
</feature>
<feature type="helix" evidence="6">
    <location>
        <begin position="194"/>
        <end position="196"/>
    </location>
</feature>
<feature type="strand" evidence="6">
    <location>
        <begin position="200"/>
        <end position="203"/>
    </location>
</feature>
<feature type="helix" evidence="6">
    <location>
        <begin position="210"/>
        <end position="213"/>
    </location>
</feature>
<feature type="strand" evidence="6">
    <location>
        <begin position="223"/>
        <end position="227"/>
    </location>
</feature>
<feature type="helix" evidence="6">
    <location>
        <begin position="229"/>
        <end position="231"/>
    </location>
</feature>
<feature type="helix" evidence="6">
    <location>
        <begin position="242"/>
        <end position="246"/>
    </location>
</feature>
<feature type="helix" evidence="6">
    <location>
        <begin position="254"/>
        <end position="274"/>
    </location>
</feature>
<feature type="turn" evidence="6">
    <location>
        <begin position="278"/>
        <end position="281"/>
    </location>
</feature>
<feature type="helix" evidence="6">
    <location>
        <begin position="290"/>
        <end position="293"/>
    </location>
</feature>
<feature type="strand" evidence="6">
    <location>
        <begin position="307"/>
        <end position="309"/>
    </location>
</feature>
<feature type="helix" evidence="6">
    <location>
        <begin position="312"/>
        <end position="314"/>
    </location>
</feature>
<feature type="strand" evidence="6">
    <location>
        <begin position="316"/>
        <end position="322"/>
    </location>
</feature>
<feature type="strand" evidence="6">
    <location>
        <begin position="324"/>
        <end position="327"/>
    </location>
</feature>
<feature type="strand" evidence="6">
    <location>
        <begin position="332"/>
        <end position="334"/>
    </location>
</feature>
<feature type="strand" evidence="6">
    <location>
        <begin position="339"/>
        <end position="349"/>
    </location>
</feature>
<feature type="strand" evidence="6">
    <location>
        <begin position="352"/>
        <end position="364"/>
    </location>
</feature>
<feature type="strand" evidence="6">
    <location>
        <begin position="370"/>
        <end position="377"/>
    </location>
</feature>
<feature type="strand" evidence="6">
    <location>
        <begin position="382"/>
        <end position="391"/>
    </location>
</feature>
<feature type="strand" evidence="6">
    <location>
        <begin position="395"/>
        <end position="405"/>
    </location>
</feature>
<feature type="strand" evidence="6">
    <location>
        <begin position="416"/>
        <end position="425"/>
    </location>
</feature>
<feature type="strand" evidence="6">
    <location>
        <begin position="430"/>
        <end position="434"/>
    </location>
</feature>
<feature type="strand" evidence="6">
    <location>
        <begin position="445"/>
        <end position="448"/>
    </location>
</feature>
<accession>P00591</accession>
<organism>
    <name type="scientific">Sus scrofa</name>
    <name type="common">Pig</name>
    <dbReference type="NCBI Taxonomy" id="9823"/>
    <lineage>
        <taxon>Eukaryota</taxon>
        <taxon>Metazoa</taxon>
        <taxon>Chordata</taxon>
        <taxon>Craniata</taxon>
        <taxon>Vertebrata</taxon>
        <taxon>Euteleostomi</taxon>
        <taxon>Mammalia</taxon>
        <taxon>Eutheria</taxon>
        <taxon>Laurasiatheria</taxon>
        <taxon>Artiodactyla</taxon>
        <taxon>Suina</taxon>
        <taxon>Suidae</taxon>
        <taxon>Sus</taxon>
    </lineage>
</organism>
<protein>
    <recommendedName>
        <fullName evidence="5">Pancreatic triacylglycerol lipase</fullName>
        <shortName>PL</shortName>
        <shortName>PTL</shortName>
        <shortName>Pancreatic lipase</shortName>
        <ecNumber evidence="1">3.1.1.3</ecNumber>
    </recommendedName>
</protein>
<proteinExistence type="evidence at protein level"/>
<name>LIPP_PIG</name>
<keyword id="KW-0002">3D-structure</keyword>
<keyword id="KW-0106">Calcium</keyword>
<keyword id="KW-0903">Direct protein sequencing</keyword>
<keyword id="KW-1015">Disulfide bond</keyword>
<keyword id="KW-0325">Glycoprotein</keyword>
<keyword id="KW-0378">Hydrolase</keyword>
<keyword id="KW-0442">Lipid degradation</keyword>
<keyword id="KW-0443">Lipid metabolism</keyword>
<keyword id="KW-0479">Metal-binding</keyword>
<keyword id="KW-1185">Reference proteome</keyword>
<keyword id="KW-0964">Secreted</keyword>
<reference key="1">
    <citation type="journal article" date="1981" name="Biochim. Biophys. Acta">
        <title>Porcine pancreatic lipase. Completion of the primary structure.</title>
        <authorList>
            <person name="de Caro J.D."/>
            <person name="Boudouard M."/>
            <person name="Bonicel J.J."/>
            <person name="Guidoni A.A."/>
            <person name="Desnuelle P."/>
            <person name="Rovery M."/>
        </authorList>
    </citation>
    <scope>PROTEIN SEQUENCE OF 308-449</scope>
</reference>
<reference key="2">
    <citation type="journal article" date="1979" name="Eur. J. Biochem.">
        <title>Porcine pancreatic lipase. Sequence of the first 234 amino acids of the peptide chain.</title>
        <authorList>
            <person name="Bianchetta J.D."/>
            <person name="Bidaud J."/>
            <person name="Guidoni A.A."/>
            <person name="Bonicel J.J."/>
            <person name="Rovery M."/>
        </authorList>
    </citation>
    <scope>PROTEIN SEQUENCE OF 1-234</scope>
    <scope>GLYCOSYLATION AT ASN-167</scope>
</reference>
<reference key="3">
    <citation type="journal article" date="1979" name="Biochimie">
        <title>Porcine pancreatic lipase. Sequence between the 235th and 307th amino acids.</title>
        <authorList>
            <person name="Guidoni A.A."/>
            <person name="Bonicel J.J."/>
            <person name="Bianchetta J.D."/>
            <person name="Rovery M."/>
        </authorList>
    </citation>
    <scope>PROTEIN SEQUENCE OF 235-307</scope>
</reference>
<reference key="4">
    <citation type="journal article" date="1982" name="Eur. J. Biochem.">
        <title>Porcine pancreatic lipase. The disulfide bridges and the sulfhydryl groups.</title>
        <authorList>
            <person name="Benkouka F."/>
            <person name="Guidoni A.A."/>
            <person name="de Caro J.D."/>
            <person name="Bonicel J.J."/>
            <person name="Desnuelle P.A."/>
            <person name="Rovery M."/>
        </authorList>
    </citation>
    <scope>DISULFIDE BONDS</scope>
</reference>
<reference key="5">
    <citation type="journal article" date="1981" name="Biochim. Biophys. Acta">
        <title>Characterization of the serine reacting with diethyl p-nitrophenyl phosphate in porcine pancreatic lipase.</title>
        <authorList>
            <person name="Guidoni A.A."/>
            <person name="Benkouka F."/>
            <person name="de Caro J.D."/>
            <person name="Rovery M."/>
        </authorList>
    </citation>
    <scope>SUBSTRATE-BINDING SITE</scope>
</reference>
<reference key="6">
    <citation type="journal article" date="1987" name="Eur. J. Biochem.">
        <title>Primary structure of the glycans of porcine pancreatic lipase.</title>
        <authorList>
            <person name="Fournet B."/>
            <person name="Leroy Y."/>
            <person name="Montreuil J."/>
            <person name="Decaro J."/>
            <person name="Rovery M."/>
            <person name="van Kuik J.A."/>
            <person name="Vliegenthart J.F.G."/>
        </authorList>
    </citation>
    <scope>STRUCTURE OF CARBOHYDRATE</scope>
</reference>
<reference key="7">
    <citation type="journal article" date="1996" name="J. Biol. Chem.">
        <title>Lipase activation by nonionic detergents. The crystal structure of the porcine lipase-colipase-tetraethylene glycol monooctyl ether complex.</title>
        <authorList>
            <person name="Hermoso J."/>
            <person name="Pignol D."/>
            <person name="Kerfelec B."/>
            <person name="Crenon I."/>
            <person name="Chapus C."/>
            <person name="Fontecilla-Camps J.-C."/>
        </authorList>
    </citation>
    <scope>X-RAY CRYSTALLOGRAPHY (2.8 ANGSTROMS)</scope>
    <scope>SEQUENCE REVISION TO 30-32</scope>
</reference>
<dbReference type="EC" id="3.1.1.3" evidence="1"/>
<dbReference type="PIR" id="A90638">
    <property type="entry name" value="LIPG"/>
</dbReference>
<dbReference type="PDB" id="1ETH">
    <property type="method" value="X-ray"/>
    <property type="resolution" value="2.80 A"/>
    <property type="chains" value="A/C=1-450"/>
</dbReference>
<dbReference type="PDBsum" id="1ETH"/>
<dbReference type="SMR" id="P00591"/>
<dbReference type="FunCoup" id="P00591">
    <property type="interactions" value="219"/>
</dbReference>
<dbReference type="STRING" id="9823.ENSSSCP00000011355"/>
<dbReference type="BindingDB" id="P00591"/>
<dbReference type="ChEMBL" id="CHEMBL1687677"/>
<dbReference type="DrugCentral" id="P00591"/>
<dbReference type="Allergome" id="971">
    <property type="allergen name" value="Sus s Lipase"/>
</dbReference>
<dbReference type="ESTHER" id="pig-1plip">
    <property type="family name" value="Pancreatic_lipase"/>
</dbReference>
<dbReference type="GlyCosmos" id="P00591">
    <property type="glycosylation" value="1 site, No reported glycans"/>
</dbReference>
<dbReference type="GlyGen" id="P00591">
    <property type="glycosylation" value="1 site"/>
</dbReference>
<dbReference type="iPTMnet" id="P00591"/>
<dbReference type="PaxDb" id="9823-ENSSSCP00000011355"/>
<dbReference type="eggNOG" id="ENOG502QUK7">
    <property type="taxonomic scope" value="Eukaryota"/>
</dbReference>
<dbReference type="InParanoid" id="P00591"/>
<dbReference type="BRENDA" id="3.1.1.3">
    <property type="organism ID" value="6170"/>
</dbReference>
<dbReference type="EvolutionaryTrace" id="P00591"/>
<dbReference type="Proteomes" id="UP000008227">
    <property type="component" value="Unplaced"/>
</dbReference>
<dbReference type="Proteomes" id="UP000314985">
    <property type="component" value="Unplaced"/>
</dbReference>
<dbReference type="Proteomes" id="UP000694570">
    <property type="component" value="Unplaced"/>
</dbReference>
<dbReference type="Proteomes" id="UP000694571">
    <property type="component" value="Unplaced"/>
</dbReference>
<dbReference type="Proteomes" id="UP000694720">
    <property type="component" value="Unplaced"/>
</dbReference>
<dbReference type="Proteomes" id="UP000694722">
    <property type="component" value="Unplaced"/>
</dbReference>
<dbReference type="Proteomes" id="UP000694723">
    <property type="component" value="Unplaced"/>
</dbReference>
<dbReference type="Proteomes" id="UP000694724">
    <property type="component" value="Unplaced"/>
</dbReference>
<dbReference type="Proteomes" id="UP000694725">
    <property type="component" value="Unplaced"/>
</dbReference>
<dbReference type="Proteomes" id="UP000694726">
    <property type="component" value="Unplaced"/>
</dbReference>
<dbReference type="Proteomes" id="UP000694727">
    <property type="component" value="Unplaced"/>
</dbReference>
<dbReference type="Proteomes" id="UP000694728">
    <property type="component" value="Unplaced"/>
</dbReference>
<dbReference type="GO" id="GO:0005615">
    <property type="term" value="C:extracellular space"/>
    <property type="evidence" value="ECO:0000318"/>
    <property type="project" value="GO_Central"/>
</dbReference>
<dbReference type="GO" id="GO:0047376">
    <property type="term" value="F:all-trans-retinyl-palmitate hydrolase, all-trans-retinol forming activity"/>
    <property type="evidence" value="ECO:0007669"/>
    <property type="project" value="RHEA"/>
</dbReference>
<dbReference type="GO" id="GO:0004465">
    <property type="term" value="F:lipoprotein lipase activity"/>
    <property type="evidence" value="ECO:0000318"/>
    <property type="project" value="GO_Central"/>
</dbReference>
<dbReference type="GO" id="GO:0046872">
    <property type="term" value="F:metal ion binding"/>
    <property type="evidence" value="ECO:0007669"/>
    <property type="project" value="UniProtKB-KW"/>
</dbReference>
<dbReference type="GO" id="GO:0008970">
    <property type="term" value="F:phospholipase A1 activity"/>
    <property type="evidence" value="ECO:0000318"/>
    <property type="project" value="GO_Central"/>
</dbReference>
<dbReference type="GO" id="GO:0004806">
    <property type="term" value="F:triacylglycerol lipase activity"/>
    <property type="evidence" value="ECO:0000250"/>
    <property type="project" value="UniProtKB"/>
</dbReference>
<dbReference type="GO" id="GO:0042632">
    <property type="term" value="P:cholesterol homeostasis"/>
    <property type="evidence" value="ECO:0000318"/>
    <property type="project" value="GO_Central"/>
</dbReference>
<dbReference type="GO" id="GO:0006633">
    <property type="term" value="P:fatty acid biosynthetic process"/>
    <property type="evidence" value="ECO:0000318"/>
    <property type="project" value="GO_Central"/>
</dbReference>
<dbReference type="GO" id="GO:0034375">
    <property type="term" value="P:high-density lipoprotein particle remodeling"/>
    <property type="evidence" value="ECO:0000318"/>
    <property type="project" value="GO_Central"/>
</dbReference>
<dbReference type="GO" id="GO:0019433">
    <property type="term" value="P:triglyceride catabolic process"/>
    <property type="evidence" value="ECO:0000318"/>
    <property type="project" value="GO_Central"/>
</dbReference>
<dbReference type="CDD" id="cd00707">
    <property type="entry name" value="Pancreat_lipase_like"/>
    <property type="match status" value="1"/>
</dbReference>
<dbReference type="CDD" id="cd01759">
    <property type="entry name" value="PLAT_PL"/>
    <property type="match status" value="1"/>
</dbReference>
<dbReference type="FunFam" id="3.40.50.1820:FF:000033">
    <property type="entry name" value="Pancreatic triacylglycerol lipase"/>
    <property type="match status" value="1"/>
</dbReference>
<dbReference type="FunFam" id="2.60.60.20:FF:000003">
    <property type="entry name" value="Triacylglycerol lipase"/>
    <property type="match status" value="1"/>
</dbReference>
<dbReference type="Gene3D" id="3.40.50.1820">
    <property type="entry name" value="alpha/beta hydrolase"/>
    <property type="match status" value="1"/>
</dbReference>
<dbReference type="Gene3D" id="2.60.60.20">
    <property type="entry name" value="PLAT/LH2 domain"/>
    <property type="match status" value="1"/>
</dbReference>
<dbReference type="InterPro" id="IPR029058">
    <property type="entry name" value="AB_hydrolase_fold"/>
</dbReference>
<dbReference type="InterPro" id="IPR013818">
    <property type="entry name" value="Lipase"/>
</dbReference>
<dbReference type="InterPro" id="IPR016272">
    <property type="entry name" value="Lipase_LIPH"/>
</dbReference>
<dbReference type="InterPro" id="IPR033906">
    <property type="entry name" value="Lipase_N"/>
</dbReference>
<dbReference type="InterPro" id="IPR002331">
    <property type="entry name" value="Lipase_panc"/>
</dbReference>
<dbReference type="InterPro" id="IPR001024">
    <property type="entry name" value="PLAT/LH2_dom"/>
</dbReference>
<dbReference type="InterPro" id="IPR036392">
    <property type="entry name" value="PLAT/LH2_dom_sf"/>
</dbReference>
<dbReference type="InterPro" id="IPR000734">
    <property type="entry name" value="TAG_lipase"/>
</dbReference>
<dbReference type="PANTHER" id="PTHR11610">
    <property type="entry name" value="LIPASE"/>
    <property type="match status" value="1"/>
</dbReference>
<dbReference type="PANTHER" id="PTHR11610:SF147">
    <property type="entry name" value="PANCREATIC TRIACYLGLYCEROL LIPASE"/>
    <property type="match status" value="1"/>
</dbReference>
<dbReference type="Pfam" id="PF00151">
    <property type="entry name" value="Lipase"/>
    <property type="match status" value="1"/>
</dbReference>
<dbReference type="Pfam" id="PF01477">
    <property type="entry name" value="PLAT"/>
    <property type="match status" value="1"/>
</dbReference>
<dbReference type="PIRSF" id="PIRSF000865">
    <property type="entry name" value="Lipoprotein_lipase_LIPH"/>
    <property type="match status" value="1"/>
</dbReference>
<dbReference type="PRINTS" id="PR00823">
    <property type="entry name" value="PANCLIPASE"/>
</dbReference>
<dbReference type="PRINTS" id="PR00821">
    <property type="entry name" value="TAGLIPASE"/>
</dbReference>
<dbReference type="SMART" id="SM00308">
    <property type="entry name" value="LH2"/>
    <property type="match status" value="1"/>
</dbReference>
<dbReference type="SUPFAM" id="SSF53474">
    <property type="entry name" value="alpha/beta-Hydrolases"/>
    <property type="match status" value="1"/>
</dbReference>
<dbReference type="SUPFAM" id="SSF49723">
    <property type="entry name" value="Lipase/lipooxygenase domain (PLAT/LH2 domain)"/>
    <property type="match status" value="1"/>
</dbReference>
<dbReference type="PROSITE" id="PS00120">
    <property type="entry name" value="LIPASE_SER"/>
    <property type="match status" value="1"/>
</dbReference>
<dbReference type="PROSITE" id="PS50095">
    <property type="entry name" value="PLAT"/>
    <property type="match status" value="1"/>
</dbReference>